<protein>
    <recommendedName>
        <fullName evidence="1">L-seryl-tRNA(Sec) selenium transferase</fullName>
        <ecNumber evidence="1">2.9.1.1</ecNumber>
    </recommendedName>
    <alternativeName>
        <fullName evidence="1">Selenocysteine synthase</fullName>
        <shortName evidence="1">Sec synthase</shortName>
    </alternativeName>
    <alternativeName>
        <fullName evidence="1">Selenocysteinyl-tRNA(Sec) synthase</fullName>
    </alternativeName>
</protein>
<name>SELA_DESDA</name>
<sequence>MNNLFRSIPAVDLCLTALGQADPSLVEAPRGLMRDLITEFWDKKRHEIREGHCKKNEQLTLDACLPGLMTHVRAGLRSRFRAALNATGVVVHTNMGRSVLAKEAREAVITAATGYCNLELDMQSGGRGSRHALVEDLLCRLTGAEAALVVNNNAAAVLLVLDTFCKGGEVVVSRGELVEIGGSFRIPEVMEKSGATLREVGATNRTHLHDYSAAINENTRALMRVHTSNYRIVGFHSAVPLPELAALARRHDLPLIEDLGSGSLTDFSSCGLPDEPTVPSVLAQGADIATFSGDKVLGGPQAGIITGRKDMVDTLKRNPLTRALRCDKLCLAGLEATLRLYLDPEKARQKIPTLRMICRPAEELARAARTLAAALRKGLAGSSASCLVSLRADVSRVGGGAFPQYDLPTTLVCLKPENCSATALKAALLRTDPPLIGRLEDDSFCLDPRTLSAEDRPTLLRVLREALALAAKEII</sequence>
<comment type="function">
    <text evidence="1">Converts seryl-tRNA(Sec) to selenocysteinyl-tRNA(Sec) required for selenoprotein biosynthesis.</text>
</comment>
<comment type="catalytic activity">
    <reaction evidence="1">
        <text>L-seryl-tRNA(Sec) + selenophosphate + H(+) = L-selenocysteinyl-tRNA(Sec) + phosphate</text>
        <dbReference type="Rhea" id="RHEA:22728"/>
        <dbReference type="Rhea" id="RHEA-COMP:9742"/>
        <dbReference type="Rhea" id="RHEA-COMP:9743"/>
        <dbReference type="ChEBI" id="CHEBI:15378"/>
        <dbReference type="ChEBI" id="CHEBI:16144"/>
        <dbReference type="ChEBI" id="CHEBI:43474"/>
        <dbReference type="ChEBI" id="CHEBI:78533"/>
        <dbReference type="ChEBI" id="CHEBI:78573"/>
        <dbReference type="EC" id="2.9.1.1"/>
    </reaction>
</comment>
<comment type="cofactor">
    <cofactor evidence="1">
        <name>pyridoxal 5'-phosphate</name>
        <dbReference type="ChEBI" id="CHEBI:597326"/>
    </cofactor>
</comment>
<comment type="pathway">
    <text evidence="1">Aminoacyl-tRNA biosynthesis; selenocysteinyl-tRNA(Sec) biosynthesis; selenocysteinyl-tRNA(Sec) from L-seryl-tRNA(Sec) (bacterial route): step 1/1.</text>
</comment>
<comment type="subcellular location">
    <subcellularLocation>
        <location evidence="1">Cytoplasm</location>
    </subcellularLocation>
</comment>
<comment type="similarity">
    <text evidence="1">Belongs to the SelA family.</text>
</comment>
<organism>
    <name type="scientific">Desulfovibrio desulfuricans (strain ATCC 27774 / DSM 6949 / MB)</name>
    <dbReference type="NCBI Taxonomy" id="525146"/>
    <lineage>
        <taxon>Bacteria</taxon>
        <taxon>Pseudomonadati</taxon>
        <taxon>Thermodesulfobacteriota</taxon>
        <taxon>Desulfovibrionia</taxon>
        <taxon>Desulfovibrionales</taxon>
        <taxon>Desulfovibrionaceae</taxon>
        <taxon>Desulfovibrio</taxon>
    </lineage>
</organism>
<accession>B8J1N0</accession>
<evidence type="ECO:0000255" key="1">
    <source>
        <dbReference type="HAMAP-Rule" id="MF_00423"/>
    </source>
</evidence>
<gene>
    <name evidence="1" type="primary">selA</name>
    <name type="ordered locus">Ddes_1740</name>
</gene>
<feature type="chain" id="PRO_1000134920" description="L-seryl-tRNA(Sec) selenium transferase">
    <location>
        <begin position="1"/>
        <end position="475"/>
    </location>
</feature>
<feature type="modified residue" description="N6-(pyridoxal phosphate)lysine" evidence="1">
    <location>
        <position position="295"/>
    </location>
</feature>
<reference key="1">
    <citation type="submission" date="2009-01" db="EMBL/GenBank/DDBJ databases">
        <title>Complete sequence of Desulfovibrio desulfuricans subsp. desulfuricans str. ATCC 27774.</title>
        <authorList>
            <consortium name="US DOE Joint Genome Institute"/>
            <person name="Lucas S."/>
            <person name="Copeland A."/>
            <person name="Lapidus A."/>
            <person name="Glavina del Rio T."/>
            <person name="Tice H."/>
            <person name="Bruce D."/>
            <person name="Goodwin L."/>
            <person name="Pitluck S."/>
            <person name="Sims D."/>
            <person name="Lu M."/>
            <person name="Kiss H."/>
            <person name="Meineke L."/>
            <person name="Brettin T."/>
            <person name="Detter J.C."/>
            <person name="Han C."/>
            <person name="Larimer F."/>
            <person name="Land M."/>
            <person name="Hauser L."/>
            <person name="Kyrpides N."/>
            <person name="Ovchinnikova G."/>
            <person name="Hazen T.C."/>
        </authorList>
    </citation>
    <scope>NUCLEOTIDE SEQUENCE [LARGE SCALE GENOMIC DNA]</scope>
    <source>
        <strain>ATCC 27774 / DSM 6949 / MB</strain>
    </source>
</reference>
<keyword id="KW-0963">Cytoplasm</keyword>
<keyword id="KW-0648">Protein biosynthesis</keyword>
<keyword id="KW-0663">Pyridoxal phosphate</keyword>
<keyword id="KW-0711">Selenium</keyword>
<keyword id="KW-0808">Transferase</keyword>
<proteinExistence type="inferred from homology"/>
<dbReference type="EC" id="2.9.1.1" evidence="1"/>
<dbReference type="EMBL" id="CP001358">
    <property type="protein sequence ID" value="ACL49638.1"/>
    <property type="molecule type" value="Genomic_DNA"/>
</dbReference>
<dbReference type="SMR" id="B8J1N0"/>
<dbReference type="STRING" id="525146.Ddes_1740"/>
<dbReference type="KEGG" id="dds:Ddes_1740"/>
<dbReference type="eggNOG" id="COG1921">
    <property type="taxonomic scope" value="Bacteria"/>
</dbReference>
<dbReference type="HOGENOM" id="CLU_038142_1_0_7"/>
<dbReference type="UniPathway" id="UPA00906">
    <property type="reaction ID" value="UER00896"/>
</dbReference>
<dbReference type="GO" id="GO:0005737">
    <property type="term" value="C:cytoplasm"/>
    <property type="evidence" value="ECO:0007669"/>
    <property type="project" value="UniProtKB-SubCell"/>
</dbReference>
<dbReference type="GO" id="GO:0004125">
    <property type="term" value="F:L-seryl-tRNA(Sec) selenium transferase activity"/>
    <property type="evidence" value="ECO:0007669"/>
    <property type="project" value="UniProtKB-UniRule"/>
</dbReference>
<dbReference type="GO" id="GO:0001717">
    <property type="term" value="P:conversion of seryl-tRNAsec to selenocys-tRNAsec"/>
    <property type="evidence" value="ECO:0007669"/>
    <property type="project" value="UniProtKB-UniRule"/>
</dbReference>
<dbReference type="GO" id="GO:0001514">
    <property type="term" value="P:selenocysteine incorporation"/>
    <property type="evidence" value="ECO:0007669"/>
    <property type="project" value="UniProtKB-UniRule"/>
</dbReference>
<dbReference type="Gene3D" id="3.90.1150.180">
    <property type="match status" value="1"/>
</dbReference>
<dbReference type="Gene3D" id="3.40.640.10">
    <property type="entry name" value="Type I PLP-dependent aspartate aminotransferase-like (Major domain)"/>
    <property type="match status" value="1"/>
</dbReference>
<dbReference type="HAMAP" id="MF_00423">
    <property type="entry name" value="SelA"/>
    <property type="match status" value="1"/>
</dbReference>
<dbReference type="InterPro" id="IPR015424">
    <property type="entry name" value="PyrdxlP-dep_Trfase"/>
</dbReference>
<dbReference type="InterPro" id="IPR015421">
    <property type="entry name" value="PyrdxlP-dep_Trfase_major"/>
</dbReference>
<dbReference type="InterPro" id="IPR018319">
    <property type="entry name" value="SelA-like"/>
</dbReference>
<dbReference type="InterPro" id="IPR004534">
    <property type="entry name" value="SelA_trans"/>
</dbReference>
<dbReference type="NCBIfam" id="TIGR00474">
    <property type="entry name" value="selA"/>
    <property type="match status" value="1"/>
</dbReference>
<dbReference type="PANTHER" id="PTHR32328">
    <property type="entry name" value="L-SERYL-TRNA(SEC) SELENIUM TRANSFERASE"/>
    <property type="match status" value="1"/>
</dbReference>
<dbReference type="PANTHER" id="PTHR32328:SF0">
    <property type="entry name" value="L-SERYL-TRNA(SEC) SELENIUM TRANSFERASE"/>
    <property type="match status" value="1"/>
</dbReference>
<dbReference type="Pfam" id="PF03841">
    <property type="entry name" value="SelA"/>
    <property type="match status" value="1"/>
</dbReference>
<dbReference type="SUPFAM" id="SSF53383">
    <property type="entry name" value="PLP-dependent transferases"/>
    <property type="match status" value="1"/>
</dbReference>